<evidence type="ECO:0000255" key="1">
    <source>
        <dbReference type="HAMAP-Rule" id="MF_00418"/>
    </source>
</evidence>
<evidence type="ECO:0000305" key="2"/>
<feature type="chain" id="PRO_1000050232" description="4-hydroxy-tetrahydrodipicolinate synthase">
    <location>
        <begin position="1"/>
        <end position="296"/>
    </location>
</feature>
<feature type="active site" description="Proton donor/acceptor" evidence="1">
    <location>
        <position position="137"/>
    </location>
</feature>
<feature type="active site" description="Schiff-base intermediate with substrate" evidence="1">
    <location>
        <position position="165"/>
    </location>
</feature>
<feature type="binding site" evidence="1">
    <location>
        <position position="49"/>
    </location>
    <ligand>
        <name>pyruvate</name>
        <dbReference type="ChEBI" id="CHEBI:15361"/>
    </ligand>
</feature>
<feature type="binding site" evidence="1">
    <location>
        <position position="207"/>
    </location>
    <ligand>
        <name>pyruvate</name>
        <dbReference type="ChEBI" id="CHEBI:15361"/>
    </ligand>
</feature>
<feature type="site" description="Part of a proton relay during catalysis" evidence="1">
    <location>
        <position position="48"/>
    </location>
</feature>
<feature type="site" description="Part of a proton relay during catalysis" evidence="1">
    <location>
        <position position="111"/>
    </location>
</feature>
<gene>
    <name evidence="1" type="primary">dapA</name>
    <name type="ordered locus">Nham_2262</name>
</gene>
<name>DAPA_NITHX</name>
<comment type="function">
    <text evidence="1">Catalyzes the condensation of (S)-aspartate-beta-semialdehyde [(S)-ASA] and pyruvate to 4-hydroxy-tetrahydrodipicolinate (HTPA).</text>
</comment>
<comment type="catalytic activity">
    <reaction evidence="1">
        <text>L-aspartate 4-semialdehyde + pyruvate = (2S,4S)-4-hydroxy-2,3,4,5-tetrahydrodipicolinate + H2O + H(+)</text>
        <dbReference type="Rhea" id="RHEA:34171"/>
        <dbReference type="ChEBI" id="CHEBI:15361"/>
        <dbReference type="ChEBI" id="CHEBI:15377"/>
        <dbReference type="ChEBI" id="CHEBI:15378"/>
        <dbReference type="ChEBI" id="CHEBI:67139"/>
        <dbReference type="ChEBI" id="CHEBI:537519"/>
        <dbReference type="EC" id="4.3.3.7"/>
    </reaction>
</comment>
<comment type="pathway">
    <text evidence="1">Amino-acid biosynthesis; L-lysine biosynthesis via DAP pathway; (S)-tetrahydrodipicolinate from L-aspartate: step 3/4.</text>
</comment>
<comment type="subunit">
    <text evidence="1">Homotetramer; dimer of dimers.</text>
</comment>
<comment type="subcellular location">
    <subcellularLocation>
        <location evidence="1">Cytoplasm</location>
    </subcellularLocation>
</comment>
<comment type="similarity">
    <text evidence="1">Belongs to the DapA family.</text>
</comment>
<comment type="caution">
    <text evidence="2">Was originally thought to be a dihydrodipicolinate synthase (DHDPS), catalyzing the condensation of (S)-aspartate-beta-semialdehyde [(S)-ASA] and pyruvate to dihydrodipicolinate (DHDP). However, it was shown in E.coli that the product of the enzymatic reaction is not dihydrodipicolinate but in fact (4S)-4-hydroxy-2,3,4,5-tetrahydro-(2S)-dipicolinic acid (HTPA), and that the consecutive dehydration reaction leading to DHDP is not spontaneous but catalyzed by DapB.</text>
</comment>
<accession>Q1QL43</accession>
<organism>
    <name type="scientific">Nitrobacter hamburgensis (strain DSM 10229 / NCIMB 13809 / X14)</name>
    <dbReference type="NCBI Taxonomy" id="323097"/>
    <lineage>
        <taxon>Bacteria</taxon>
        <taxon>Pseudomonadati</taxon>
        <taxon>Pseudomonadota</taxon>
        <taxon>Alphaproteobacteria</taxon>
        <taxon>Hyphomicrobiales</taxon>
        <taxon>Nitrobacteraceae</taxon>
        <taxon>Nitrobacter</taxon>
    </lineage>
</organism>
<dbReference type="EC" id="4.3.3.7" evidence="1"/>
<dbReference type="EMBL" id="CP000319">
    <property type="protein sequence ID" value="ABE63054.1"/>
    <property type="molecule type" value="Genomic_DNA"/>
</dbReference>
<dbReference type="RefSeq" id="WP_011510731.1">
    <property type="nucleotide sequence ID" value="NC_007964.1"/>
</dbReference>
<dbReference type="SMR" id="Q1QL43"/>
<dbReference type="STRING" id="323097.Nham_2262"/>
<dbReference type="KEGG" id="nha:Nham_2262"/>
<dbReference type="eggNOG" id="COG0329">
    <property type="taxonomic scope" value="Bacteria"/>
</dbReference>
<dbReference type="HOGENOM" id="CLU_049343_7_0_5"/>
<dbReference type="OrthoDB" id="9782828at2"/>
<dbReference type="UniPathway" id="UPA00034">
    <property type="reaction ID" value="UER00017"/>
</dbReference>
<dbReference type="Proteomes" id="UP000001953">
    <property type="component" value="Chromosome"/>
</dbReference>
<dbReference type="GO" id="GO:0005829">
    <property type="term" value="C:cytosol"/>
    <property type="evidence" value="ECO:0007669"/>
    <property type="project" value="TreeGrafter"/>
</dbReference>
<dbReference type="GO" id="GO:0008840">
    <property type="term" value="F:4-hydroxy-tetrahydrodipicolinate synthase activity"/>
    <property type="evidence" value="ECO:0007669"/>
    <property type="project" value="UniProtKB-UniRule"/>
</dbReference>
<dbReference type="GO" id="GO:0019877">
    <property type="term" value="P:diaminopimelate biosynthetic process"/>
    <property type="evidence" value="ECO:0007669"/>
    <property type="project" value="UniProtKB-UniRule"/>
</dbReference>
<dbReference type="GO" id="GO:0009089">
    <property type="term" value="P:lysine biosynthetic process via diaminopimelate"/>
    <property type="evidence" value="ECO:0007669"/>
    <property type="project" value="UniProtKB-UniRule"/>
</dbReference>
<dbReference type="CDD" id="cd00950">
    <property type="entry name" value="DHDPS"/>
    <property type="match status" value="1"/>
</dbReference>
<dbReference type="Gene3D" id="3.20.20.70">
    <property type="entry name" value="Aldolase class I"/>
    <property type="match status" value="1"/>
</dbReference>
<dbReference type="HAMAP" id="MF_00418">
    <property type="entry name" value="DapA"/>
    <property type="match status" value="1"/>
</dbReference>
<dbReference type="InterPro" id="IPR013785">
    <property type="entry name" value="Aldolase_TIM"/>
</dbReference>
<dbReference type="InterPro" id="IPR005263">
    <property type="entry name" value="DapA"/>
</dbReference>
<dbReference type="InterPro" id="IPR002220">
    <property type="entry name" value="DapA-like"/>
</dbReference>
<dbReference type="InterPro" id="IPR020625">
    <property type="entry name" value="Schiff_base-form_aldolases_AS"/>
</dbReference>
<dbReference type="InterPro" id="IPR020624">
    <property type="entry name" value="Schiff_base-form_aldolases_CS"/>
</dbReference>
<dbReference type="NCBIfam" id="TIGR00674">
    <property type="entry name" value="dapA"/>
    <property type="match status" value="1"/>
</dbReference>
<dbReference type="PANTHER" id="PTHR12128:SF66">
    <property type="entry name" value="4-HYDROXY-2-OXOGLUTARATE ALDOLASE, MITOCHONDRIAL"/>
    <property type="match status" value="1"/>
</dbReference>
<dbReference type="PANTHER" id="PTHR12128">
    <property type="entry name" value="DIHYDRODIPICOLINATE SYNTHASE"/>
    <property type="match status" value="1"/>
</dbReference>
<dbReference type="Pfam" id="PF00701">
    <property type="entry name" value="DHDPS"/>
    <property type="match status" value="1"/>
</dbReference>
<dbReference type="PIRSF" id="PIRSF001365">
    <property type="entry name" value="DHDPS"/>
    <property type="match status" value="1"/>
</dbReference>
<dbReference type="PRINTS" id="PR00146">
    <property type="entry name" value="DHPICSNTHASE"/>
</dbReference>
<dbReference type="SMART" id="SM01130">
    <property type="entry name" value="DHDPS"/>
    <property type="match status" value="1"/>
</dbReference>
<dbReference type="SUPFAM" id="SSF51569">
    <property type="entry name" value="Aldolase"/>
    <property type="match status" value="1"/>
</dbReference>
<dbReference type="PROSITE" id="PS00665">
    <property type="entry name" value="DHDPS_1"/>
    <property type="match status" value="1"/>
</dbReference>
<dbReference type="PROSITE" id="PS00666">
    <property type="entry name" value="DHDPS_2"/>
    <property type="match status" value="1"/>
</dbReference>
<proteinExistence type="inferred from homology"/>
<keyword id="KW-0028">Amino-acid biosynthesis</keyword>
<keyword id="KW-0963">Cytoplasm</keyword>
<keyword id="KW-0220">Diaminopimelate biosynthesis</keyword>
<keyword id="KW-0456">Lyase</keyword>
<keyword id="KW-0457">Lysine biosynthesis</keyword>
<keyword id="KW-1185">Reference proteome</keyword>
<keyword id="KW-0704">Schiff base</keyword>
<protein>
    <recommendedName>
        <fullName evidence="1">4-hydroxy-tetrahydrodipicolinate synthase</fullName>
        <shortName evidence="1">HTPA synthase</shortName>
        <ecNumber evidence="1">4.3.3.7</ecNumber>
    </recommendedName>
</protein>
<sequence length="296" mass="31385">MASKTKFRGSYTALVTPFKNGSVDEAAFRSLVSWQIGEGVHGLVPVGTTGESPTLSHDEHRKVVEWCIDEARGRVPVIAGAGSNSTREAVDLAVHAEKAGADAVLVVTPYYNKPTQEGMYHHFKTVNDAIGIPIIIYNIPSRSVVDLSVETMARLFELKNIAGVKDATANVARVSLQRHAMGPDFIQLSGEDMTALAFMAAGGHGCVSVVANVAPKLCASLMSAVLKGDYATGLAIQDRLVPLHAAIFKEPGLAGAKHGLKLLGRLDEVVRLPLLPVTPPTGKVIRDAMVHAGLLN</sequence>
<reference key="1">
    <citation type="submission" date="2006-03" db="EMBL/GenBank/DDBJ databases">
        <title>Complete sequence of chromosome of Nitrobacter hamburgensis X14.</title>
        <authorList>
            <consortium name="US DOE Joint Genome Institute"/>
            <person name="Copeland A."/>
            <person name="Lucas S."/>
            <person name="Lapidus A."/>
            <person name="Barry K."/>
            <person name="Detter J.C."/>
            <person name="Glavina del Rio T."/>
            <person name="Hammon N."/>
            <person name="Israni S."/>
            <person name="Dalin E."/>
            <person name="Tice H."/>
            <person name="Pitluck S."/>
            <person name="Chain P."/>
            <person name="Malfatti S."/>
            <person name="Shin M."/>
            <person name="Vergez L."/>
            <person name="Schmutz J."/>
            <person name="Larimer F."/>
            <person name="Land M."/>
            <person name="Hauser L."/>
            <person name="Kyrpides N."/>
            <person name="Ivanova N."/>
            <person name="Ward B."/>
            <person name="Arp D."/>
            <person name="Klotz M."/>
            <person name="Stein L."/>
            <person name="O'Mullan G."/>
            <person name="Starkenburg S."/>
            <person name="Sayavedra L."/>
            <person name="Poret-Peterson A.T."/>
            <person name="Gentry M.E."/>
            <person name="Bruce D."/>
            <person name="Richardson P."/>
        </authorList>
    </citation>
    <scope>NUCLEOTIDE SEQUENCE [LARGE SCALE GENOMIC DNA]</scope>
    <source>
        <strain>DSM 10229 / NCIMB 13809 / X14</strain>
    </source>
</reference>